<protein>
    <recommendedName>
        <fullName evidence="1">Inner membrane-spanning protein YciB</fullName>
    </recommendedName>
</protein>
<sequence>MKQFLDFLPLVVFFAFYKLYDIYAATTALIVATAVVLIYSWVRYRKVEKMALITFVLVAVFGGLTIFFHNDEFIKWKVTVIYALFAGALLFSQWVMKKPLIQRMLGKELSLPQQVWSRLNLAWAVFFILCGLANIYIAFWLPQNIWVNFKVFGLTALTLVFTLLSGIYIYRHMPQDDHH</sequence>
<proteinExistence type="inferred from homology"/>
<gene>
    <name evidence="1" type="primary">yciB</name>
    <name type="ordered locus">KPN78578_12170</name>
    <name type="ORF">KPN_01245</name>
</gene>
<evidence type="ECO:0000255" key="1">
    <source>
        <dbReference type="HAMAP-Rule" id="MF_00189"/>
    </source>
</evidence>
<dbReference type="EMBL" id="CP000647">
    <property type="protein sequence ID" value="ABR76678.1"/>
    <property type="molecule type" value="Genomic_DNA"/>
</dbReference>
<dbReference type="RefSeq" id="WP_002901631.1">
    <property type="nucleotide sequence ID" value="NC_009648.1"/>
</dbReference>
<dbReference type="STRING" id="272620.KPN_01245"/>
<dbReference type="PaxDb" id="272620-KPN_01245"/>
<dbReference type="EnsemblBacteria" id="ABR76678">
    <property type="protein sequence ID" value="ABR76678"/>
    <property type="gene ID" value="KPN_01245"/>
</dbReference>
<dbReference type="KEGG" id="kpn:KPN_01245"/>
<dbReference type="HOGENOM" id="CLU_089554_2_0_6"/>
<dbReference type="Proteomes" id="UP000000265">
    <property type="component" value="Chromosome"/>
</dbReference>
<dbReference type="GO" id="GO:0005886">
    <property type="term" value="C:plasma membrane"/>
    <property type="evidence" value="ECO:0007669"/>
    <property type="project" value="UniProtKB-SubCell"/>
</dbReference>
<dbReference type="HAMAP" id="MF_00189">
    <property type="entry name" value="YciB"/>
    <property type="match status" value="1"/>
</dbReference>
<dbReference type="InterPro" id="IPR006008">
    <property type="entry name" value="YciB"/>
</dbReference>
<dbReference type="NCBIfam" id="TIGR00997">
    <property type="entry name" value="ispZ"/>
    <property type="match status" value="1"/>
</dbReference>
<dbReference type="NCBIfam" id="NF001324">
    <property type="entry name" value="PRK00259.1-2"/>
    <property type="match status" value="1"/>
</dbReference>
<dbReference type="NCBIfam" id="NF001325">
    <property type="entry name" value="PRK00259.1-3"/>
    <property type="match status" value="1"/>
</dbReference>
<dbReference type="NCBIfam" id="NF001326">
    <property type="entry name" value="PRK00259.1-4"/>
    <property type="match status" value="1"/>
</dbReference>
<dbReference type="PANTHER" id="PTHR36917:SF1">
    <property type="entry name" value="INNER MEMBRANE-SPANNING PROTEIN YCIB"/>
    <property type="match status" value="1"/>
</dbReference>
<dbReference type="PANTHER" id="PTHR36917">
    <property type="entry name" value="INTRACELLULAR SEPTATION PROTEIN A-RELATED"/>
    <property type="match status" value="1"/>
</dbReference>
<dbReference type="Pfam" id="PF04279">
    <property type="entry name" value="IspA"/>
    <property type="match status" value="1"/>
</dbReference>
<reference key="1">
    <citation type="submission" date="2006-09" db="EMBL/GenBank/DDBJ databases">
        <authorList>
            <consortium name="The Klebsiella pneumonia Genome Sequencing Project"/>
            <person name="McClelland M."/>
            <person name="Sanderson E.K."/>
            <person name="Spieth J."/>
            <person name="Clifton W.S."/>
            <person name="Latreille P."/>
            <person name="Sabo A."/>
            <person name="Pepin K."/>
            <person name="Bhonagiri V."/>
            <person name="Porwollik S."/>
            <person name="Ali J."/>
            <person name="Wilson R.K."/>
        </authorList>
    </citation>
    <scope>NUCLEOTIDE SEQUENCE [LARGE SCALE GENOMIC DNA]</scope>
    <source>
        <strain>ATCC 700721 / MGH 78578</strain>
    </source>
</reference>
<keyword id="KW-0997">Cell inner membrane</keyword>
<keyword id="KW-1003">Cell membrane</keyword>
<keyword id="KW-0472">Membrane</keyword>
<keyword id="KW-0812">Transmembrane</keyword>
<keyword id="KW-1133">Transmembrane helix</keyword>
<comment type="function">
    <text evidence="1">Plays a role in cell envelope biogenesis, maintenance of cell envelope integrity and membrane homeostasis.</text>
</comment>
<comment type="subcellular location">
    <subcellularLocation>
        <location evidence="1">Cell inner membrane</location>
        <topology evidence="1">Multi-pass membrane protein</topology>
    </subcellularLocation>
</comment>
<comment type="similarity">
    <text evidence="1">Belongs to the YciB family.</text>
</comment>
<accession>A6T7V7</accession>
<organism>
    <name type="scientific">Klebsiella pneumoniae subsp. pneumoniae (strain ATCC 700721 / MGH 78578)</name>
    <dbReference type="NCBI Taxonomy" id="272620"/>
    <lineage>
        <taxon>Bacteria</taxon>
        <taxon>Pseudomonadati</taxon>
        <taxon>Pseudomonadota</taxon>
        <taxon>Gammaproteobacteria</taxon>
        <taxon>Enterobacterales</taxon>
        <taxon>Enterobacteriaceae</taxon>
        <taxon>Klebsiella/Raoultella group</taxon>
        <taxon>Klebsiella</taxon>
        <taxon>Klebsiella pneumoniae complex</taxon>
    </lineage>
</organism>
<feature type="chain" id="PRO_1000021022" description="Inner membrane-spanning protein YciB">
    <location>
        <begin position="1"/>
        <end position="179"/>
    </location>
</feature>
<feature type="transmembrane region" description="Helical" evidence="1">
    <location>
        <begin position="22"/>
        <end position="42"/>
    </location>
</feature>
<feature type="transmembrane region" description="Helical" evidence="1">
    <location>
        <begin position="50"/>
        <end position="70"/>
    </location>
</feature>
<feature type="transmembrane region" description="Helical" evidence="1">
    <location>
        <begin position="76"/>
        <end position="96"/>
    </location>
</feature>
<feature type="transmembrane region" description="Helical" evidence="1">
    <location>
        <begin position="121"/>
        <end position="141"/>
    </location>
</feature>
<feature type="transmembrane region" description="Helical" evidence="1">
    <location>
        <begin position="149"/>
        <end position="169"/>
    </location>
</feature>
<name>YCIB_KLEP7</name>